<gene>
    <name type="primary">KRI1</name>
</gene>
<feature type="chain" id="PRO_0000298975" description="Protein KRI1 homolog">
    <location>
        <begin position="1"/>
        <end position="705"/>
    </location>
</feature>
<feature type="region of interest" description="Disordered" evidence="3">
    <location>
        <begin position="31"/>
        <end position="63"/>
    </location>
</feature>
<feature type="region of interest" description="Disordered" evidence="3">
    <location>
        <begin position="83"/>
        <end position="111"/>
    </location>
</feature>
<feature type="region of interest" description="Disordered" evidence="3">
    <location>
        <begin position="125"/>
        <end position="197"/>
    </location>
</feature>
<feature type="region of interest" description="Disordered" evidence="3">
    <location>
        <begin position="248"/>
        <end position="283"/>
    </location>
</feature>
<feature type="region of interest" description="Disordered" evidence="3">
    <location>
        <begin position="305"/>
        <end position="348"/>
    </location>
</feature>
<feature type="region of interest" description="Disordered" evidence="3">
    <location>
        <begin position="409"/>
        <end position="494"/>
    </location>
</feature>
<feature type="region of interest" description="Disordered" evidence="3">
    <location>
        <begin position="592"/>
        <end position="705"/>
    </location>
</feature>
<feature type="compositionally biased region" description="Basic and acidic residues" evidence="3">
    <location>
        <begin position="31"/>
        <end position="42"/>
    </location>
</feature>
<feature type="compositionally biased region" description="Basic and acidic residues" evidence="3">
    <location>
        <begin position="52"/>
        <end position="63"/>
    </location>
</feature>
<feature type="compositionally biased region" description="Polar residues" evidence="3">
    <location>
        <begin position="137"/>
        <end position="151"/>
    </location>
</feature>
<feature type="compositionally biased region" description="Basic and acidic residues" evidence="3">
    <location>
        <begin position="152"/>
        <end position="167"/>
    </location>
</feature>
<feature type="compositionally biased region" description="Acidic residues" evidence="3">
    <location>
        <begin position="168"/>
        <end position="177"/>
    </location>
</feature>
<feature type="compositionally biased region" description="Acidic residues" evidence="3">
    <location>
        <begin position="250"/>
        <end position="265"/>
    </location>
</feature>
<feature type="compositionally biased region" description="Basic and acidic residues" evidence="3">
    <location>
        <begin position="321"/>
        <end position="336"/>
    </location>
</feature>
<feature type="compositionally biased region" description="Acidic residues" evidence="3">
    <location>
        <begin position="416"/>
        <end position="426"/>
    </location>
</feature>
<feature type="compositionally biased region" description="Basic residues" evidence="3">
    <location>
        <begin position="648"/>
        <end position="658"/>
    </location>
</feature>
<feature type="compositionally biased region" description="Basic residues" evidence="3">
    <location>
        <begin position="684"/>
        <end position="705"/>
    </location>
</feature>
<feature type="modified residue" description="Phosphothreonine" evidence="1">
    <location>
        <position position="91"/>
    </location>
</feature>
<feature type="modified residue" description="Phosphoserine" evidence="1">
    <location>
        <position position="93"/>
    </location>
</feature>
<feature type="modified residue" description="Phosphoserine" evidence="1">
    <location>
        <position position="94"/>
    </location>
</feature>
<feature type="modified residue" description="Phosphoserine" evidence="1">
    <location>
        <position position="95"/>
    </location>
</feature>
<feature type="modified residue" description="Phosphoserine" evidence="1">
    <location>
        <position position="97"/>
    </location>
</feature>
<feature type="modified residue" description="Phosphoserine" evidence="1">
    <location>
        <position position="135"/>
    </location>
</feature>
<feature type="modified residue" description="Phosphoserine" evidence="1">
    <location>
        <position position="140"/>
    </location>
</feature>
<feature type="modified residue" description="Phosphoserine" evidence="1">
    <location>
        <position position="162"/>
    </location>
</feature>
<feature type="modified residue" description="Phosphoserine" evidence="1">
    <location>
        <position position="170"/>
    </location>
</feature>
<feature type="modified residue" description="Phosphoserine" evidence="2">
    <location>
        <position position="175"/>
    </location>
</feature>
<feature type="modified residue" description="Phosphoserine" evidence="1">
    <location>
        <position position="279"/>
    </location>
</feature>
<feature type="modified residue" description="Phosphoserine" evidence="1">
    <location>
        <position position="280"/>
    </location>
</feature>
<feature type="modified residue" description="Phosphoserine" evidence="1">
    <location>
        <position position="308"/>
    </location>
</feature>
<feature type="modified residue" description="Phosphoserine" evidence="1">
    <location>
        <position position="630"/>
    </location>
</feature>
<evidence type="ECO:0000250" key="1">
    <source>
        <dbReference type="UniProtKB" id="Q8N9T8"/>
    </source>
</evidence>
<evidence type="ECO:0000250" key="2">
    <source>
        <dbReference type="UniProtKB" id="Q8VDQ9"/>
    </source>
</evidence>
<evidence type="ECO:0000256" key="3">
    <source>
        <dbReference type="SAM" id="MobiDB-lite"/>
    </source>
</evidence>
<evidence type="ECO:0000305" key="4"/>
<protein>
    <recommendedName>
        <fullName>Protein KRI1 homolog</fullName>
    </recommendedName>
</protein>
<name>KRI1_BOVIN</name>
<keyword id="KW-0597">Phosphoprotein</keyword>
<keyword id="KW-1185">Reference proteome</keyword>
<reference key="1">
    <citation type="journal article" date="2005" name="BMC Genomics">
        <title>Characterization of 954 bovine full-CDS cDNA sequences.</title>
        <authorList>
            <person name="Harhay G.P."/>
            <person name="Sonstegard T.S."/>
            <person name="Keele J.W."/>
            <person name="Heaton M.P."/>
            <person name="Clawson M.L."/>
            <person name="Snelling W.M."/>
            <person name="Wiedmann R.T."/>
            <person name="Van Tassell C.P."/>
            <person name="Smith T.P.L."/>
        </authorList>
    </citation>
    <scope>NUCLEOTIDE SEQUENCE [LARGE SCALE MRNA]</scope>
</reference>
<proteinExistence type="evidence at transcript level"/>
<sequence>MPEPRGSSPLRVNAAFAARYGRYREREELQRLKDRYGDRHSSSDSSSESDSSDEHVEFDPQQERDFYRTLSLLKKKDPRIYQKDATFYQRTASSSDSEEEPAAEKRKKVQPMYLKDYERKVILEKGGKYVDEENSDGETSNQRLQQSSSKSYVEEQKQLKESFRAFVEDSEDEDSAEEGGSGLLQKRAKSKEEKAQEDADYIEWLKGQKEIQNPDTLKELTHLREFWNNPELDEGERFLRDYILNKRYEEEGEEEDEEEEDEEEERVPGPPVQLAVDDSSDEGELFLKKQEDFELKYNFRFEEPDSASVKTYPRSIASSVRRKDERRKEKREETRERKKREKARKQEELKQLKNLKRKEILAKLERLRQVTGNETLGFEEQDLEGDFDPARHDQLMQKCFGDEYYGAMEEEKPQFEEEEGLEDDWNWDTWAGPEQGGAWSQQEPHCEDPDFNMDADYDPSQPRKKQREAPSLGKKKRKSPFATAVGQEKPVFDPGDKTFEEYLDEYYRLDYEDIIDDLPCRFKYRTVVPCDFGLSTEEILAADDKELNRWCSLKKTCMYRSEQEELQDKRVYSQKARNVWKKQQIFKSLCPEEAEMPTEATGKPQRDRAGSSGQLVAPDGACGKRSQPESTPAEEEADPVTPTEKLAPQRRKRGKKARLLGPTVTLGGREFSRQRLQAFGLNPKRLHFRQLGRQRRKQQGPKSSH</sequence>
<organism>
    <name type="scientific">Bos taurus</name>
    <name type="common">Bovine</name>
    <dbReference type="NCBI Taxonomy" id="9913"/>
    <lineage>
        <taxon>Eukaryota</taxon>
        <taxon>Metazoa</taxon>
        <taxon>Chordata</taxon>
        <taxon>Craniata</taxon>
        <taxon>Vertebrata</taxon>
        <taxon>Euteleostomi</taxon>
        <taxon>Mammalia</taxon>
        <taxon>Eutheria</taxon>
        <taxon>Laurasiatheria</taxon>
        <taxon>Artiodactyla</taxon>
        <taxon>Ruminantia</taxon>
        <taxon>Pecora</taxon>
        <taxon>Bovidae</taxon>
        <taxon>Bovinae</taxon>
        <taxon>Bos</taxon>
    </lineage>
</organism>
<accession>Q0V8M0</accession>
<comment type="similarity">
    <text evidence="4">Belongs to the KRI1 family.</text>
</comment>
<comment type="sequence caution" evidence="4">
    <conflict type="erroneous initiation">
        <sequence resource="EMBL-CDS" id="ABG67037"/>
    </conflict>
    <text>Extended N-terminus.</text>
</comment>
<dbReference type="EMBL" id="BT026198">
    <property type="protein sequence ID" value="ABG67037.1"/>
    <property type="status" value="ALT_INIT"/>
    <property type="molecule type" value="mRNA"/>
</dbReference>
<dbReference type="RefSeq" id="NP_001103542.1">
    <property type="nucleotide sequence ID" value="NM_001110072.1"/>
</dbReference>
<dbReference type="SMR" id="Q0V8M0"/>
<dbReference type="FunCoup" id="Q0V8M0">
    <property type="interactions" value="2029"/>
</dbReference>
<dbReference type="STRING" id="9913.ENSBTAP00000014206"/>
<dbReference type="PaxDb" id="9913-ENSBTAP00000014206"/>
<dbReference type="Ensembl" id="ENSBTAT00000014206.7">
    <property type="protein sequence ID" value="ENSBTAP00000014206.6"/>
    <property type="gene ID" value="ENSBTAG00000010729.7"/>
</dbReference>
<dbReference type="GeneID" id="511427"/>
<dbReference type="KEGG" id="bta:511427"/>
<dbReference type="CTD" id="65095"/>
<dbReference type="VEuPathDB" id="HostDB:ENSBTAG00000010729"/>
<dbReference type="VGNC" id="VGNC:30713">
    <property type="gene designation" value="KRI1"/>
</dbReference>
<dbReference type="eggNOG" id="KOG2409">
    <property type="taxonomic scope" value="Eukaryota"/>
</dbReference>
<dbReference type="GeneTree" id="ENSGT00390000005605"/>
<dbReference type="HOGENOM" id="CLU_009647_0_1_1"/>
<dbReference type="InParanoid" id="Q0V8M0"/>
<dbReference type="OMA" id="WDNYDPR"/>
<dbReference type="OrthoDB" id="10252032at2759"/>
<dbReference type="Proteomes" id="UP000009136">
    <property type="component" value="Chromosome 7"/>
</dbReference>
<dbReference type="Bgee" id="ENSBTAG00000010729">
    <property type="expression patterns" value="Expressed in blood and 105 other cell types or tissues"/>
</dbReference>
<dbReference type="GO" id="GO:0030686">
    <property type="term" value="C:90S preribosome"/>
    <property type="evidence" value="ECO:0000318"/>
    <property type="project" value="GO_Central"/>
</dbReference>
<dbReference type="GO" id="GO:0005730">
    <property type="term" value="C:nucleolus"/>
    <property type="evidence" value="ECO:0000318"/>
    <property type="project" value="GO_Central"/>
</dbReference>
<dbReference type="GO" id="GO:0000447">
    <property type="term" value="P:endonucleolytic cleavage in ITS1 to separate SSU-rRNA from 5.8S rRNA and LSU-rRNA from tricistronic rRNA transcript (SSU-rRNA, 5.8S rRNA, LSU-rRNA)"/>
    <property type="evidence" value="ECO:0000318"/>
    <property type="project" value="GO_Central"/>
</dbReference>
<dbReference type="InterPro" id="IPR018034">
    <property type="entry name" value="Kri1"/>
</dbReference>
<dbReference type="InterPro" id="IPR024626">
    <property type="entry name" value="Kri1-like_C"/>
</dbReference>
<dbReference type="PANTHER" id="PTHR14490:SF5">
    <property type="entry name" value="PROTEIN KRI1 HOMOLOG"/>
    <property type="match status" value="1"/>
</dbReference>
<dbReference type="PANTHER" id="PTHR14490">
    <property type="entry name" value="ZINC FINGER, ZZ TYPE"/>
    <property type="match status" value="1"/>
</dbReference>
<dbReference type="Pfam" id="PF05178">
    <property type="entry name" value="Kri1"/>
    <property type="match status" value="1"/>
</dbReference>
<dbReference type="Pfam" id="PF12936">
    <property type="entry name" value="Kri1_C"/>
    <property type="match status" value="1"/>
</dbReference>